<name>RL17_BARBK</name>
<keyword id="KW-0687">Ribonucleoprotein</keyword>
<keyword id="KW-0689">Ribosomal protein</keyword>
<organism>
    <name type="scientific">Bartonella bacilliformis (strain ATCC 35685 / KC583 / Herrer 020/F12,63)</name>
    <dbReference type="NCBI Taxonomy" id="360095"/>
    <lineage>
        <taxon>Bacteria</taxon>
        <taxon>Pseudomonadati</taxon>
        <taxon>Pseudomonadota</taxon>
        <taxon>Alphaproteobacteria</taxon>
        <taxon>Hyphomicrobiales</taxon>
        <taxon>Bartonellaceae</taxon>
        <taxon>Bartonella</taxon>
    </lineage>
</organism>
<comment type="subunit">
    <text evidence="1">Part of the 50S ribosomal subunit. Contacts protein L32.</text>
</comment>
<comment type="similarity">
    <text evidence="1">Belongs to the bacterial ribosomal protein bL17 family.</text>
</comment>
<evidence type="ECO:0000255" key="1">
    <source>
        <dbReference type="HAMAP-Rule" id="MF_01368"/>
    </source>
</evidence>
<evidence type="ECO:0000305" key="2"/>
<proteinExistence type="inferred from homology"/>
<protein>
    <recommendedName>
        <fullName evidence="1">Large ribosomal subunit protein bL17</fullName>
    </recommendedName>
    <alternativeName>
        <fullName evidence="2">50S ribosomal protein L17</fullName>
    </alternativeName>
</protein>
<sequence>MRHGKSGRKLNRTTSHRKAMFANMAASLIEHEQIVTTLPKAKEIRPIVEKLVTLGKRGDLHARRQAIAAIRDTEKVAKLFSALAPRYESRHGGYLRIMKAGFRTGDNAPMAVVEFVDRDVNAKGATDHERKVAKVTEKEDS</sequence>
<gene>
    <name evidence="1" type="primary">rplQ</name>
    <name type="ordered locus">BARBAKC583_0723</name>
</gene>
<dbReference type="EMBL" id="CP000524">
    <property type="protein sequence ID" value="ABM44427.1"/>
    <property type="molecule type" value="Genomic_DNA"/>
</dbReference>
<dbReference type="RefSeq" id="WP_005766962.1">
    <property type="nucleotide sequence ID" value="NC_008783.1"/>
</dbReference>
<dbReference type="SMR" id="A1USR9"/>
<dbReference type="STRING" id="360095.BARBAKC583_0723"/>
<dbReference type="GeneID" id="4683795"/>
<dbReference type="KEGG" id="bbk:BARBAKC583_0723"/>
<dbReference type="PATRIC" id="fig|360095.6.peg.702"/>
<dbReference type="eggNOG" id="COG0203">
    <property type="taxonomic scope" value="Bacteria"/>
</dbReference>
<dbReference type="HOGENOM" id="CLU_074407_2_0_5"/>
<dbReference type="OrthoDB" id="9809073at2"/>
<dbReference type="Proteomes" id="UP000000643">
    <property type="component" value="Chromosome"/>
</dbReference>
<dbReference type="GO" id="GO:0022625">
    <property type="term" value="C:cytosolic large ribosomal subunit"/>
    <property type="evidence" value="ECO:0007669"/>
    <property type="project" value="TreeGrafter"/>
</dbReference>
<dbReference type="GO" id="GO:0003735">
    <property type="term" value="F:structural constituent of ribosome"/>
    <property type="evidence" value="ECO:0007669"/>
    <property type="project" value="InterPro"/>
</dbReference>
<dbReference type="GO" id="GO:0006412">
    <property type="term" value="P:translation"/>
    <property type="evidence" value="ECO:0007669"/>
    <property type="project" value="UniProtKB-UniRule"/>
</dbReference>
<dbReference type="FunFam" id="3.90.1030.10:FF:000001">
    <property type="entry name" value="50S ribosomal protein L17"/>
    <property type="match status" value="1"/>
</dbReference>
<dbReference type="Gene3D" id="3.90.1030.10">
    <property type="entry name" value="Ribosomal protein L17"/>
    <property type="match status" value="1"/>
</dbReference>
<dbReference type="HAMAP" id="MF_01368">
    <property type="entry name" value="Ribosomal_bL17"/>
    <property type="match status" value="1"/>
</dbReference>
<dbReference type="InterPro" id="IPR000456">
    <property type="entry name" value="Ribosomal_bL17"/>
</dbReference>
<dbReference type="InterPro" id="IPR047859">
    <property type="entry name" value="Ribosomal_bL17_CS"/>
</dbReference>
<dbReference type="InterPro" id="IPR036373">
    <property type="entry name" value="Ribosomal_bL17_sf"/>
</dbReference>
<dbReference type="NCBIfam" id="TIGR00059">
    <property type="entry name" value="L17"/>
    <property type="match status" value="1"/>
</dbReference>
<dbReference type="PANTHER" id="PTHR14413:SF16">
    <property type="entry name" value="LARGE RIBOSOMAL SUBUNIT PROTEIN BL17M"/>
    <property type="match status" value="1"/>
</dbReference>
<dbReference type="PANTHER" id="PTHR14413">
    <property type="entry name" value="RIBOSOMAL PROTEIN L17"/>
    <property type="match status" value="1"/>
</dbReference>
<dbReference type="Pfam" id="PF01196">
    <property type="entry name" value="Ribosomal_L17"/>
    <property type="match status" value="1"/>
</dbReference>
<dbReference type="SUPFAM" id="SSF64263">
    <property type="entry name" value="Prokaryotic ribosomal protein L17"/>
    <property type="match status" value="1"/>
</dbReference>
<dbReference type="PROSITE" id="PS01167">
    <property type="entry name" value="RIBOSOMAL_L17"/>
    <property type="match status" value="1"/>
</dbReference>
<reference key="1">
    <citation type="submission" date="2006-12" db="EMBL/GenBank/DDBJ databases">
        <authorList>
            <person name="Hendrix L."/>
            <person name="Mohamoud Y."/>
            <person name="Radune D."/>
            <person name="Shvartsbeyn A."/>
            <person name="Daugherty S."/>
            <person name="Dodson R."/>
            <person name="Durkin A.S."/>
            <person name="Harkins D."/>
            <person name="Huot H."/>
            <person name="Kothari S.P."/>
            <person name="Madupu R."/>
            <person name="Li J."/>
            <person name="Nelson W.C."/>
            <person name="Shrivastava S."/>
            <person name="Giglio M.G."/>
            <person name="Haft D."/>
            <person name="Selengut J."/>
            <person name="Fraser-Ligget C."/>
            <person name="Seshadri R."/>
        </authorList>
    </citation>
    <scope>NUCLEOTIDE SEQUENCE [LARGE SCALE GENOMIC DNA]</scope>
    <source>
        <strain>ATCC 35685 / KC583 / Herrer 020/F12,63</strain>
    </source>
</reference>
<feature type="chain" id="PRO_1000055771" description="Large ribosomal subunit protein bL17">
    <location>
        <begin position="1"/>
        <end position="141"/>
    </location>
</feature>
<accession>A1USR9</accession>